<comment type="similarity">
    <text evidence="1">Belongs to the SfsA family.</text>
</comment>
<organism>
    <name type="scientific">Marinomonas sp. (strain MWYL1)</name>
    <dbReference type="NCBI Taxonomy" id="400668"/>
    <lineage>
        <taxon>Bacteria</taxon>
        <taxon>Pseudomonadati</taxon>
        <taxon>Pseudomonadota</taxon>
        <taxon>Gammaproteobacteria</taxon>
        <taxon>Oceanospirillales</taxon>
        <taxon>Oceanospirillaceae</taxon>
        <taxon>Marinomonas</taxon>
    </lineage>
</organism>
<accession>A6W2V7</accession>
<sequence>MRVAVFDCDGFHKKFWSPVVKFPTPLIEGKLIKRYKRFLSDIELPNGDVVVAHCPNTGSMKRCQQDGARVWLSKSDNPKRKLAYTWELVEVDAQYLACINTGYPNKLVGEAISNGVVKELAEYPEQKAEVKYGEKSRIDWLLTGNDGRKCYVEVKSVTLLEEDGLGYFPDAVTDRGRKHLYELAKMVEEGHRAVMFFCVSHTGINSVTPAAHIDKKYAQAFVEVVKKGVEVIAYQVAIDSQEMKVVRSVPVVMPTLLD</sequence>
<protein>
    <recommendedName>
        <fullName evidence="1">Sugar fermentation stimulation protein homolog</fullName>
    </recommendedName>
</protein>
<gene>
    <name evidence="1" type="primary">sfsA</name>
    <name type="ordered locus">Mmwyl1_4140</name>
</gene>
<dbReference type="EMBL" id="CP000749">
    <property type="protein sequence ID" value="ABR73036.1"/>
    <property type="molecule type" value="Genomic_DNA"/>
</dbReference>
<dbReference type="SMR" id="A6W2V7"/>
<dbReference type="STRING" id="400668.Mmwyl1_4140"/>
<dbReference type="KEGG" id="mmw:Mmwyl1_4140"/>
<dbReference type="eggNOG" id="COG1489">
    <property type="taxonomic scope" value="Bacteria"/>
</dbReference>
<dbReference type="HOGENOM" id="CLU_052299_2_0_6"/>
<dbReference type="OrthoDB" id="9802365at2"/>
<dbReference type="GO" id="GO:0003677">
    <property type="term" value="F:DNA binding"/>
    <property type="evidence" value="ECO:0007669"/>
    <property type="project" value="InterPro"/>
</dbReference>
<dbReference type="CDD" id="cd22359">
    <property type="entry name" value="SfsA-like_bacterial"/>
    <property type="match status" value="1"/>
</dbReference>
<dbReference type="FunFam" id="2.40.50.580:FF:000001">
    <property type="entry name" value="Sugar fermentation stimulation protein A"/>
    <property type="match status" value="1"/>
</dbReference>
<dbReference type="FunFam" id="3.40.1350.60:FF:000001">
    <property type="entry name" value="Sugar fermentation stimulation protein A"/>
    <property type="match status" value="1"/>
</dbReference>
<dbReference type="Gene3D" id="2.40.50.580">
    <property type="match status" value="1"/>
</dbReference>
<dbReference type="Gene3D" id="3.40.1350.60">
    <property type="match status" value="1"/>
</dbReference>
<dbReference type="HAMAP" id="MF_00095">
    <property type="entry name" value="SfsA"/>
    <property type="match status" value="1"/>
</dbReference>
<dbReference type="InterPro" id="IPR005224">
    <property type="entry name" value="SfsA"/>
</dbReference>
<dbReference type="InterPro" id="IPR040452">
    <property type="entry name" value="SfsA_C"/>
</dbReference>
<dbReference type="InterPro" id="IPR041465">
    <property type="entry name" value="SfsA_N"/>
</dbReference>
<dbReference type="NCBIfam" id="TIGR00230">
    <property type="entry name" value="sfsA"/>
    <property type="match status" value="1"/>
</dbReference>
<dbReference type="PANTHER" id="PTHR30545">
    <property type="entry name" value="SUGAR FERMENTATION STIMULATION PROTEIN A"/>
    <property type="match status" value="1"/>
</dbReference>
<dbReference type="PANTHER" id="PTHR30545:SF2">
    <property type="entry name" value="SUGAR FERMENTATION STIMULATION PROTEIN A"/>
    <property type="match status" value="1"/>
</dbReference>
<dbReference type="Pfam" id="PF03749">
    <property type="entry name" value="SfsA"/>
    <property type="match status" value="1"/>
</dbReference>
<dbReference type="Pfam" id="PF17746">
    <property type="entry name" value="SfsA_N"/>
    <property type="match status" value="1"/>
</dbReference>
<name>SFSA_MARMS</name>
<proteinExistence type="inferred from homology"/>
<feature type="chain" id="PRO_0000340143" description="Sugar fermentation stimulation protein homolog">
    <location>
        <begin position="1"/>
        <end position="258"/>
    </location>
</feature>
<evidence type="ECO:0000255" key="1">
    <source>
        <dbReference type="HAMAP-Rule" id="MF_00095"/>
    </source>
</evidence>
<reference key="1">
    <citation type="submission" date="2007-06" db="EMBL/GenBank/DDBJ databases">
        <title>Complete sequence of Marinomonas sp. MWYL1.</title>
        <authorList>
            <consortium name="US DOE Joint Genome Institute"/>
            <person name="Copeland A."/>
            <person name="Lucas S."/>
            <person name="Lapidus A."/>
            <person name="Barry K."/>
            <person name="Glavina del Rio T."/>
            <person name="Dalin E."/>
            <person name="Tice H."/>
            <person name="Pitluck S."/>
            <person name="Kiss H."/>
            <person name="Brettin T."/>
            <person name="Bruce D."/>
            <person name="Detter J.C."/>
            <person name="Han C."/>
            <person name="Schmutz J."/>
            <person name="Larimer F."/>
            <person name="Land M."/>
            <person name="Hauser L."/>
            <person name="Kyrpides N."/>
            <person name="Kim E."/>
            <person name="Johnston A.W.B."/>
            <person name="Todd J.D."/>
            <person name="Rogers R."/>
            <person name="Wexler M."/>
            <person name="Bond P.L."/>
            <person name="Li Y."/>
            <person name="Richardson P."/>
        </authorList>
    </citation>
    <scope>NUCLEOTIDE SEQUENCE [LARGE SCALE GENOMIC DNA]</scope>
    <source>
        <strain>MWYL1</strain>
    </source>
</reference>